<evidence type="ECO:0000255" key="1"/>
<evidence type="ECO:0000269" key="2">
    <source>
    </source>
</evidence>
<evidence type="ECO:0000269" key="3">
    <source>
    </source>
</evidence>
<evidence type="ECO:0000305" key="4"/>
<dbReference type="EMBL" id="AL123456">
    <property type="protein sequence ID" value="CCP46482.1"/>
    <property type="molecule type" value="Genomic_DNA"/>
</dbReference>
<dbReference type="PIR" id="D70788">
    <property type="entry name" value="D70788"/>
</dbReference>
<dbReference type="RefSeq" id="WP_003901691.1">
    <property type="nucleotide sequence ID" value="NC_000962.3"/>
</dbReference>
<dbReference type="SMR" id="P9WMT3"/>
<dbReference type="STRING" id="83332.Rv3659c"/>
<dbReference type="PaxDb" id="83332-Rv3659c"/>
<dbReference type="DNASU" id="885627"/>
<dbReference type="GeneID" id="885627"/>
<dbReference type="KEGG" id="mtu:Rv3659c"/>
<dbReference type="PATRIC" id="fig|83332.12.peg.4079"/>
<dbReference type="TubercuList" id="Rv3659c"/>
<dbReference type="eggNOG" id="COG4962">
    <property type="taxonomic scope" value="Bacteria"/>
</dbReference>
<dbReference type="InParanoid" id="P9WMT3"/>
<dbReference type="OrthoDB" id="9810761at2"/>
<dbReference type="PhylomeDB" id="P9WMT3"/>
<dbReference type="PHI-base" id="PHI:7453"/>
<dbReference type="Proteomes" id="UP000001584">
    <property type="component" value="Chromosome"/>
</dbReference>
<dbReference type="GO" id="GO:0005737">
    <property type="term" value="C:cytoplasm"/>
    <property type="evidence" value="ECO:0007669"/>
    <property type="project" value="UniProtKB-SubCell"/>
</dbReference>
<dbReference type="GO" id="GO:0005524">
    <property type="term" value="F:ATP binding"/>
    <property type="evidence" value="ECO:0007669"/>
    <property type="project" value="UniProtKB-KW"/>
</dbReference>
<dbReference type="GO" id="GO:0016887">
    <property type="term" value="F:ATP hydrolysis activity"/>
    <property type="evidence" value="ECO:0007669"/>
    <property type="project" value="InterPro"/>
</dbReference>
<dbReference type="CDD" id="cd01130">
    <property type="entry name" value="VirB11-like_ATPase"/>
    <property type="match status" value="1"/>
</dbReference>
<dbReference type="FunFam" id="3.30.450.380:FF:000002">
    <property type="entry name" value="Secretion protein, partial"/>
    <property type="match status" value="1"/>
</dbReference>
<dbReference type="FunFam" id="3.40.50.300:FF:001596">
    <property type="entry name" value="Secretion protein, partial"/>
    <property type="match status" value="1"/>
</dbReference>
<dbReference type="Gene3D" id="3.30.450.380">
    <property type="match status" value="1"/>
</dbReference>
<dbReference type="Gene3D" id="3.40.50.300">
    <property type="entry name" value="P-loop containing nucleotide triphosphate hydrolases"/>
    <property type="match status" value="1"/>
</dbReference>
<dbReference type="InterPro" id="IPR027417">
    <property type="entry name" value="P-loop_NTPase"/>
</dbReference>
<dbReference type="InterPro" id="IPR001482">
    <property type="entry name" value="T2SS/T4SS_dom"/>
</dbReference>
<dbReference type="InterPro" id="IPR050921">
    <property type="entry name" value="T4SS_GSP_E_ATPase"/>
</dbReference>
<dbReference type="InterPro" id="IPR022399">
    <property type="entry name" value="TadA-like_ATPase"/>
</dbReference>
<dbReference type="NCBIfam" id="TIGR03819">
    <property type="entry name" value="heli_sec_ATPase"/>
    <property type="match status" value="1"/>
</dbReference>
<dbReference type="PANTHER" id="PTHR30486">
    <property type="entry name" value="TWITCHING MOTILITY PROTEIN PILT"/>
    <property type="match status" value="1"/>
</dbReference>
<dbReference type="PANTHER" id="PTHR30486:SF6">
    <property type="entry name" value="TYPE IV PILUS RETRACTATION ATPASE PILT"/>
    <property type="match status" value="1"/>
</dbReference>
<dbReference type="Pfam" id="PF00437">
    <property type="entry name" value="T2SSE"/>
    <property type="match status" value="1"/>
</dbReference>
<dbReference type="SUPFAM" id="SSF52540">
    <property type="entry name" value="P-loop containing nucleoside triphosphate hydrolases"/>
    <property type="match status" value="1"/>
</dbReference>
<keyword id="KW-0067">ATP-binding</keyword>
<keyword id="KW-0184">Conjugation</keyword>
<keyword id="KW-0963">Cytoplasm</keyword>
<keyword id="KW-0547">Nucleotide-binding</keyword>
<keyword id="KW-1185">Reference proteome</keyword>
<keyword id="KW-0813">Transport</keyword>
<feature type="chain" id="PRO_0000390679" description="Putative conjugal transfer protein Rv3659c">
    <location>
        <begin position="1"/>
        <end position="352"/>
    </location>
</feature>
<feature type="binding site" evidence="1">
    <location>
        <begin position="160"/>
        <end position="167"/>
    </location>
    <ligand>
        <name>ATP</name>
        <dbReference type="ChEBI" id="CHEBI:30616"/>
    </ligand>
</feature>
<proteinExistence type="evidence at transcript level"/>
<sequence length="352" mass="36691">MLGDTEVLANLRVLQTELTGAGILEPLLSADGTTDVLVTAPDSVWVDDGNGLRRSQIRFADESAVRRLAQRLALAAGRRLDDAQPWVDGQLTGIGVGGFAVRLHAVLPPVATQGTCLSLRVLRPATQDLAALAAAGAIDPAAAALVADIVTARLAFLVCGGTGAGKTTLLAAMLGAVSPDERIVCVEDAAELAPRHPHLVKLVARRANVEGIGEVTVRQLVRQALRMRPDRIVVGEVRGAEVVDLLAALNTGHEGGAGTVHANNPGEVPARMEALGALGGLDRAALHSQLAAAVQVLLHVARDRAGRRRLAEIAVLRQAEGRVQAVTVWHADRGMSDDAAALHDLLRSRASA</sequence>
<gene>
    <name type="ordered locus">Rv3659c</name>
</gene>
<protein>
    <recommendedName>
        <fullName>Putative conjugal transfer protein Rv3659c</fullName>
    </recommendedName>
</protein>
<name>Y3659_MYCTU</name>
<accession>P9WMT3</accession>
<accession>L0TEU9</accession>
<accession>Q6MWU9</accession>
<accession>Q7D547</accession>
<comment type="subcellular location">
    <subcellularLocation>
        <location evidence="4">Cytoplasm</location>
    </subcellularLocation>
</comment>
<comment type="induction">
    <text evidence="3">Expressed at a higher level in a phoP disruption mutant than in the wild type.</text>
</comment>
<comment type="disruption phenotype">
    <text evidence="2">Not essential for growth.</text>
</comment>
<comment type="similarity">
    <text evidence="4">Belongs to the GSP E family.</text>
</comment>
<reference key="1">
    <citation type="journal article" date="1998" name="Nature">
        <title>Deciphering the biology of Mycobacterium tuberculosis from the complete genome sequence.</title>
        <authorList>
            <person name="Cole S.T."/>
            <person name="Brosch R."/>
            <person name="Parkhill J."/>
            <person name="Garnier T."/>
            <person name="Churcher C.M."/>
            <person name="Harris D.E."/>
            <person name="Gordon S.V."/>
            <person name="Eiglmeier K."/>
            <person name="Gas S."/>
            <person name="Barry C.E. III"/>
            <person name="Tekaia F."/>
            <person name="Badcock K."/>
            <person name="Basham D."/>
            <person name="Brown D."/>
            <person name="Chillingworth T."/>
            <person name="Connor R."/>
            <person name="Davies R.M."/>
            <person name="Devlin K."/>
            <person name="Feltwell T."/>
            <person name="Gentles S."/>
            <person name="Hamlin N."/>
            <person name="Holroyd S."/>
            <person name="Hornsby T."/>
            <person name="Jagels K."/>
            <person name="Krogh A."/>
            <person name="McLean J."/>
            <person name="Moule S."/>
            <person name="Murphy L.D."/>
            <person name="Oliver S."/>
            <person name="Osborne J."/>
            <person name="Quail M.A."/>
            <person name="Rajandream M.A."/>
            <person name="Rogers J."/>
            <person name="Rutter S."/>
            <person name="Seeger K."/>
            <person name="Skelton S."/>
            <person name="Squares S."/>
            <person name="Squares R."/>
            <person name="Sulston J.E."/>
            <person name="Taylor K."/>
            <person name="Whitehead S."/>
            <person name="Barrell B.G."/>
        </authorList>
    </citation>
    <scope>NUCLEOTIDE SEQUENCE [LARGE SCALE GENOMIC DNA]</scope>
    <source>
        <strain>ATCC 25618 / H37Rv</strain>
    </source>
</reference>
<reference key="2">
    <citation type="journal article" date="2003" name="Mol. Microbiol.">
        <title>Genes required for mycobacterial growth defined by high density mutagenesis.</title>
        <authorList>
            <person name="Sassetti C.M."/>
            <person name="Boyd D.H."/>
            <person name="Rubin E.J."/>
        </authorList>
    </citation>
    <scope>DISRUPTION PHENOTYPE</scope>
    <source>
        <strain>ATCC 25618 / H37Rv</strain>
    </source>
</reference>
<reference key="3">
    <citation type="journal article" date="2006" name="Mol. Microbiol.">
        <title>The Mycobacterium tuberculosis PhoPR two-component system regulates genes essential for virulence and complex lipid biosynthesis.</title>
        <authorList>
            <person name="Walters S.B."/>
            <person name="Dubnau E."/>
            <person name="Kolesnikova I."/>
            <person name="Laval F."/>
            <person name="Daffe M."/>
            <person name="Smith I."/>
        </authorList>
    </citation>
    <scope>INDUCTION</scope>
    <source>
        <strain>ATCC 25618 / H37Rv</strain>
    </source>
</reference>
<organism>
    <name type="scientific">Mycobacterium tuberculosis (strain ATCC 25618 / H37Rv)</name>
    <dbReference type="NCBI Taxonomy" id="83332"/>
    <lineage>
        <taxon>Bacteria</taxon>
        <taxon>Bacillati</taxon>
        <taxon>Actinomycetota</taxon>
        <taxon>Actinomycetes</taxon>
        <taxon>Mycobacteriales</taxon>
        <taxon>Mycobacteriaceae</taxon>
        <taxon>Mycobacterium</taxon>
        <taxon>Mycobacterium tuberculosis complex</taxon>
    </lineage>
</organism>